<accession>Q863A0</accession>
<dbReference type="EC" id="3.4.21.43" evidence="1"/>
<dbReference type="EMBL" id="AY074677">
    <property type="protein sequence ID" value="AAM10001.1"/>
    <property type="molecule type" value="Genomic_DNA"/>
</dbReference>
<dbReference type="EMBL" id="AY074665">
    <property type="protein sequence ID" value="AAM10001.1"/>
    <property type="status" value="JOINED"/>
    <property type="molecule type" value="Genomic_DNA"/>
</dbReference>
<dbReference type="EMBL" id="AY074666">
    <property type="protein sequence ID" value="AAM10001.1"/>
    <property type="status" value="JOINED"/>
    <property type="molecule type" value="Genomic_DNA"/>
</dbReference>
<dbReference type="EMBL" id="AY074667">
    <property type="protein sequence ID" value="AAM10001.1"/>
    <property type="status" value="JOINED"/>
    <property type="molecule type" value="Genomic_DNA"/>
</dbReference>
<dbReference type="EMBL" id="AY074669">
    <property type="protein sequence ID" value="AAM10001.1"/>
    <property type="status" value="JOINED"/>
    <property type="molecule type" value="Genomic_DNA"/>
</dbReference>
<dbReference type="EMBL" id="AY074671">
    <property type="protein sequence ID" value="AAM10001.1"/>
    <property type="status" value="JOINED"/>
    <property type="molecule type" value="Genomic_DNA"/>
</dbReference>
<dbReference type="EMBL" id="AY074673">
    <property type="protein sequence ID" value="AAM10001.1"/>
    <property type="status" value="JOINED"/>
    <property type="molecule type" value="Genomic_DNA"/>
</dbReference>
<dbReference type="EMBL" id="AY074675">
    <property type="protein sequence ID" value="AAM10001.1"/>
    <property type="status" value="JOINED"/>
    <property type="molecule type" value="Genomic_DNA"/>
</dbReference>
<dbReference type="EMBL" id="AY074676">
    <property type="protein sequence ID" value="AAM10001.1"/>
    <property type="status" value="JOINED"/>
    <property type="molecule type" value="Genomic_DNA"/>
</dbReference>
<dbReference type="EMBL" id="AY074674">
    <property type="protein sequence ID" value="AAM10001.1"/>
    <property type="status" value="JOINED"/>
    <property type="molecule type" value="Genomic_DNA"/>
</dbReference>
<dbReference type="EMBL" id="AY074672">
    <property type="protein sequence ID" value="AAM10001.1"/>
    <property type="status" value="JOINED"/>
    <property type="molecule type" value="Genomic_DNA"/>
</dbReference>
<dbReference type="EMBL" id="AY074670">
    <property type="protein sequence ID" value="AAM10001.1"/>
    <property type="status" value="JOINED"/>
    <property type="molecule type" value="Genomic_DNA"/>
</dbReference>
<dbReference type="EMBL" id="AY074668">
    <property type="protein sequence ID" value="AAM10001.1"/>
    <property type="status" value="JOINED"/>
    <property type="molecule type" value="Genomic_DNA"/>
</dbReference>
<dbReference type="SMR" id="Q863A0"/>
<dbReference type="FunCoup" id="Q863A0">
    <property type="interactions" value="220"/>
</dbReference>
<dbReference type="MEROPS" id="S01.194"/>
<dbReference type="GlyCosmos" id="Q863A0">
    <property type="glycosylation" value="8 sites, No reported glycans"/>
</dbReference>
<dbReference type="InParanoid" id="Q863A0"/>
<dbReference type="Proteomes" id="UP000001519">
    <property type="component" value="Unplaced"/>
</dbReference>
<dbReference type="GO" id="GO:0005576">
    <property type="term" value="C:extracellular region"/>
    <property type="evidence" value="ECO:0007669"/>
    <property type="project" value="UniProtKB-SubCell"/>
</dbReference>
<dbReference type="GO" id="GO:0046872">
    <property type="term" value="F:metal ion binding"/>
    <property type="evidence" value="ECO:0007669"/>
    <property type="project" value="UniProtKB-KW"/>
</dbReference>
<dbReference type="GO" id="GO:0004252">
    <property type="term" value="F:serine-type endopeptidase activity"/>
    <property type="evidence" value="ECO:0007669"/>
    <property type="project" value="UniProtKB-EC"/>
</dbReference>
<dbReference type="GO" id="GO:0006956">
    <property type="term" value="P:complement activation"/>
    <property type="evidence" value="ECO:0000318"/>
    <property type="project" value="GO_Central"/>
</dbReference>
<dbReference type="GO" id="GO:0006958">
    <property type="term" value="P:complement activation, classical pathway"/>
    <property type="evidence" value="ECO:0007669"/>
    <property type="project" value="UniProtKB-KW"/>
</dbReference>
<dbReference type="GO" id="GO:0045087">
    <property type="term" value="P:innate immune response"/>
    <property type="evidence" value="ECO:0007669"/>
    <property type="project" value="UniProtKB-KW"/>
</dbReference>
<dbReference type="GO" id="GO:0006508">
    <property type="term" value="P:proteolysis"/>
    <property type="evidence" value="ECO:0007669"/>
    <property type="project" value="UniProtKB-KW"/>
</dbReference>
<dbReference type="GO" id="GO:0009617">
    <property type="term" value="P:response to bacterium"/>
    <property type="evidence" value="ECO:0000318"/>
    <property type="project" value="GO_Central"/>
</dbReference>
<dbReference type="CDD" id="cd00033">
    <property type="entry name" value="CCP"/>
    <property type="match status" value="2"/>
</dbReference>
<dbReference type="CDD" id="cd00190">
    <property type="entry name" value="Tryp_SPc"/>
    <property type="match status" value="1"/>
</dbReference>
<dbReference type="CDD" id="cd01470">
    <property type="entry name" value="vWA_complement_factors"/>
    <property type="match status" value="1"/>
</dbReference>
<dbReference type="FunFam" id="3.40.50.410:FF:000065">
    <property type="entry name" value="Complement C2"/>
    <property type="match status" value="1"/>
</dbReference>
<dbReference type="FunFam" id="2.40.10.10:FF:000051">
    <property type="entry name" value="complement C2 isoform X1"/>
    <property type="match status" value="1"/>
</dbReference>
<dbReference type="FunFam" id="2.10.70.10:FF:000052">
    <property type="entry name" value="Complement factor B"/>
    <property type="match status" value="1"/>
</dbReference>
<dbReference type="FunFam" id="2.10.70.10:FF:000019">
    <property type="entry name" value="Complement factor b,-like"/>
    <property type="match status" value="2"/>
</dbReference>
<dbReference type="FunFam" id="2.40.10.10:FF:000046">
    <property type="entry name" value="Complement factor b,-like"/>
    <property type="match status" value="1"/>
</dbReference>
<dbReference type="Gene3D" id="2.10.70.10">
    <property type="entry name" value="Complement Module, domain 1"/>
    <property type="match status" value="3"/>
</dbReference>
<dbReference type="Gene3D" id="2.40.10.10">
    <property type="entry name" value="Trypsin-like serine proteases"/>
    <property type="match status" value="2"/>
</dbReference>
<dbReference type="Gene3D" id="3.40.50.410">
    <property type="entry name" value="von Willebrand factor, type A domain"/>
    <property type="match status" value="1"/>
</dbReference>
<dbReference type="InterPro" id="IPR011360">
    <property type="entry name" value="Compl_C2_B"/>
</dbReference>
<dbReference type="InterPro" id="IPR009003">
    <property type="entry name" value="Peptidase_S1_PA"/>
</dbReference>
<dbReference type="InterPro" id="IPR043504">
    <property type="entry name" value="Peptidase_S1_PA_chymotrypsin"/>
</dbReference>
<dbReference type="InterPro" id="IPR001314">
    <property type="entry name" value="Peptidase_S1A"/>
</dbReference>
<dbReference type="InterPro" id="IPR035976">
    <property type="entry name" value="Sushi/SCR/CCP_sf"/>
</dbReference>
<dbReference type="InterPro" id="IPR000436">
    <property type="entry name" value="Sushi_SCR_CCP_dom"/>
</dbReference>
<dbReference type="InterPro" id="IPR001254">
    <property type="entry name" value="Trypsin_dom"/>
</dbReference>
<dbReference type="InterPro" id="IPR018114">
    <property type="entry name" value="TRYPSIN_HIS"/>
</dbReference>
<dbReference type="InterPro" id="IPR033116">
    <property type="entry name" value="TRYPSIN_SER"/>
</dbReference>
<dbReference type="InterPro" id="IPR002035">
    <property type="entry name" value="VWF_A"/>
</dbReference>
<dbReference type="InterPro" id="IPR036465">
    <property type="entry name" value="vWFA_dom_sf"/>
</dbReference>
<dbReference type="PANTHER" id="PTHR46393:SF2">
    <property type="entry name" value="COMPLEMENT C2"/>
    <property type="match status" value="1"/>
</dbReference>
<dbReference type="PANTHER" id="PTHR46393">
    <property type="entry name" value="SUSHI DOMAIN-CONTAINING PROTEIN"/>
    <property type="match status" value="1"/>
</dbReference>
<dbReference type="Pfam" id="PF00084">
    <property type="entry name" value="Sushi"/>
    <property type="match status" value="2"/>
</dbReference>
<dbReference type="Pfam" id="PF00089">
    <property type="entry name" value="Trypsin"/>
    <property type="match status" value="1"/>
</dbReference>
<dbReference type="Pfam" id="PF00092">
    <property type="entry name" value="VWA"/>
    <property type="match status" value="1"/>
</dbReference>
<dbReference type="PIRSF" id="PIRSF001154">
    <property type="entry name" value="Compl_C2_B"/>
    <property type="match status" value="1"/>
</dbReference>
<dbReference type="PRINTS" id="PR00722">
    <property type="entry name" value="CHYMOTRYPSIN"/>
</dbReference>
<dbReference type="SMART" id="SM00032">
    <property type="entry name" value="CCP"/>
    <property type="match status" value="3"/>
</dbReference>
<dbReference type="SMART" id="SM00020">
    <property type="entry name" value="Tryp_SPc"/>
    <property type="match status" value="1"/>
</dbReference>
<dbReference type="SMART" id="SM00327">
    <property type="entry name" value="VWA"/>
    <property type="match status" value="1"/>
</dbReference>
<dbReference type="SUPFAM" id="SSF57535">
    <property type="entry name" value="Complement control module/SCR domain"/>
    <property type="match status" value="3"/>
</dbReference>
<dbReference type="SUPFAM" id="SSF50494">
    <property type="entry name" value="Trypsin-like serine proteases"/>
    <property type="match status" value="1"/>
</dbReference>
<dbReference type="SUPFAM" id="SSF53300">
    <property type="entry name" value="vWA-like"/>
    <property type="match status" value="1"/>
</dbReference>
<dbReference type="PROSITE" id="PS50923">
    <property type="entry name" value="SUSHI"/>
    <property type="match status" value="3"/>
</dbReference>
<dbReference type="PROSITE" id="PS50240">
    <property type="entry name" value="TRYPSIN_DOM"/>
    <property type="match status" value="1"/>
</dbReference>
<dbReference type="PROSITE" id="PS00134">
    <property type="entry name" value="TRYPSIN_HIS"/>
    <property type="match status" value="1"/>
</dbReference>
<dbReference type="PROSITE" id="PS00135">
    <property type="entry name" value="TRYPSIN_SER"/>
    <property type="match status" value="1"/>
</dbReference>
<dbReference type="PROSITE" id="PS50234">
    <property type="entry name" value="VWFA"/>
    <property type="match status" value="1"/>
</dbReference>
<protein>
    <recommendedName>
        <fullName evidence="7">Complement C2</fullName>
    </recommendedName>
    <alternativeName>
        <fullName>C3/C5 convertase</fullName>
    </alternativeName>
    <component>
        <recommendedName>
            <fullName>Complement C2a</fullName>
        </recommendedName>
    </component>
    <component>
        <recommendedName>
            <fullName>Serine protease complement C2b</fullName>
            <ecNumber evidence="1">3.4.21.43</ecNumber>
        </recommendedName>
    </component>
</protein>
<gene>
    <name evidence="6" type="primary">C2</name>
</gene>
<evidence type="ECO:0000250" key="1">
    <source>
        <dbReference type="UniProtKB" id="P06681"/>
    </source>
</evidence>
<evidence type="ECO:0000255" key="2"/>
<evidence type="ECO:0000255" key="3">
    <source>
        <dbReference type="PROSITE-ProRule" id="PRU00219"/>
    </source>
</evidence>
<evidence type="ECO:0000255" key="4">
    <source>
        <dbReference type="PROSITE-ProRule" id="PRU00274"/>
    </source>
</evidence>
<evidence type="ECO:0000255" key="5">
    <source>
        <dbReference type="PROSITE-ProRule" id="PRU00302"/>
    </source>
</evidence>
<evidence type="ECO:0000303" key="6">
    <source ref="1"/>
</evidence>
<evidence type="ECO:0000305" key="7"/>
<reference key="1">
    <citation type="submission" date="2002-01" db="EMBL/GenBank/DDBJ databases">
        <title>Comparative analysis of human and primate complement C2 and factor B genes.</title>
        <authorList>
            <person name="Schneider P.M."/>
            <person name="Tantalaki E."/>
            <person name="Stradmann-Bellinghausen B."/>
            <person name="Rittner C."/>
        </authorList>
    </citation>
    <scope>NUCLEOTIDE SEQUENCE [GENOMIC DNA]</scope>
</reference>
<feature type="signal peptide" evidence="1">
    <location>
        <begin position="1"/>
        <end position="20"/>
    </location>
</feature>
<feature type="chain" id="PRO_0000027607" description="Complement C2">
    <location>
        <begin position="21"/>
        <end position="752"/>
    </location>
</feature>
<feature type="chain" id="PRO_0000027608" description="Complement C2a" evidence="1">
    <location>
        <begin position="21"/>
        <end position="243"/>
    </location>
</feature>
<feature type="chain" id="PRO_0000027609" description="Serine protease complement C2b" evidence="1">
    <location>
        <begin position="244"/>
        <end position="752"/>
    </location>
</feature>
<feature type="domain" description="Sushi 1" evidence="5">
    <location>
        <begin position="22"/>
        <end position="86"/>
    </location>
</feature>
<feature type="domain" description="Sushi 2" evidence="5">
    <location>
        <begin position="87"/>
        <end position="146"/>
    </location>
</feature>
<feature type="domain" description="Sushi 3" evidence="5">
    <location>
        <begin position="149"/>
        <end position="206"/>
    </location>
</feature>
<feature type="domain" description="VWFA" evidence="3">
    <location>
        <begin position="254"/>
        <end position="452"/>
    </location>
</feature>
<feature type="domain" description="Peptidase S1" evidence="4">
    <location>
        <begin position="464"/>
        <end position="744"/>
    </location>
</feature>
<feature type="short sequence motif" description="MIDAS-like motif" evidence="1">
    <location>
        <begin position="260"/>
        <end position="264"/>
    </location>
</feature>
<feature type="active site" description="Charge relay system" evidence="1">
    <location>
        <position position="507"/>
    </location>
</feature>
<feature type="active site" description="Charge relay system" evidence="1">
    <location>
        <position position="561"/>
    </location>
</feature>
<feature type="active site" description="Charge relay system" evidence="1">
    <location>
        <position position="679"/>
    </location>
</feature>
<feature type="binding site" evidence="1">
    <location>
        <position position="262"/>
    </location>
    <ligand>
        <name>Mg(2+)</name>
        <dbReference type="ChEBI" id="CHEBI:18420"/>
    </ligand>
</feature>
<feature type="binding site" evidence="1">
    <location>
        <position position="264"/>
    </location>
    <ligand>
        <name>Mg(2+)</name>
        <dbReference type="ChEBI" id="CHEBI:18420"/>
    </ligand>
</feature>
<feature type="binding site" evidence="1">
    <location>
        <position position="337"/>
    </location>
    <ligand>
        <name>Mg(2+)</name>
        <dbReference type="ChEBI" id="CHEBI:18420"/>
    </ligand>
</feature>
<feature type="site" description="Cleavage; by C1S, MASP2 and GZMK" evidence="1">
    <location>
        <begin position="243"/>
        <end position="244"/>
    </location>
</feature>
<feature type="glycosylation site" description="N-linked (GlcNAc...) asparagine" evidence="2">
    <location>
        <position position="29"/>
    </location>
</feature>
<feature type="glycosylation site" description="N-linked (GlcNAc...) asparagine" evidence="2">
    <location>
        <position position="112"/>
    </location>
</feature>
<feature type="glycosylation site" description="N-linked (GlcNAc...) asparagine" evidence="2">
    <location>
        <position position="290"/>
    </location>
</feature>
<feature type="glycosylation site" description="N-linked (GlcNAc...) asparagine" evidence="2">
    <location>
        <position position="333"/>
    </location>
</feature>
<feature type="glycosylation site" description="N-linked (GlcNAc...) asparagine" evidence="2">
    <location>
        <position position="467"/>
    </location>
</feature>
<feature type="glycosylation site" description="N-linked (GlcNAc...) asparagine" evidence="2">
    <location>
        <position position="471"/>
    </location>
</feature>
<feature type="glycosylation site" description="N-linked (GlcNAc...) asparagine" evidence="2">
    <location>
        <position position="621"/>
    </location>
</feature>
<feature type="glycosylation site" description="N-linked (GlcNAc...) asparagine" evidence="2">
    <location>
        <position position="651"/>
    </location>
</feature>
<feature type="disulfide bond" evidence="1">
    <location>
        <begin position="24"/>
        <end position="64"/>
    </location>
</feature>
<feature type="disulfide bond" evidence="1">
    <location>
        <begin position="51"/>
        <end position="84"/>
    </location>
</feature>
<feature type="disulfide bond" evidence="1">
    <location>
        <begin position="89"/>
        <end position="131"/>
    </location>
</feature>
<feature type="disulfide bond" evidence="1">
    <location>
        <begin position="117"/>
        <end position="144"/>
    </location>
</feature>
<feature type="disulfide bond" evidence="1">
    <location>
        <begin position="151"/>
        <end position="191"/>
    </location>
</feature>
<feature type="disulfide bond" evidence="1">
    <location>
        <begin position="177"/>
        <end position="204"/>
    </location>
</feature>
<feature type="disulfide bond" evidence="1">
    <location>
        <begin position="463"/>
        <end position="581"/>
    </location>
</feature>
<feature type="disulfide bond" evidence="1">
    <location>
        <begin position="492"/>
        <end position="508"/>
    </location>
</feature>
<feature type="disulfide bond" evidence="1">
    <location>
        <begin position="584"/>
        <end position="600"/>
    </location>
</feature>
<feature type="disulfide bond" evidence="1">
    <location>
        <begin position="638"/>
        <end position="665"/>
    </location>
</feature>
<feature type="disulfide bond" evidence="1">
    <location>
        <begin position="675"/>
        <end position="705"/>
    </location>
</feature>
<keyword id="KW-0180">Complement pathway</keyword>
<keyword id="KW-1015">Disulfide bond</keyword>
<keyword id="KW-0325">Glycoprotein</keyword>
<keyword id="KW-0378">Hydrolase</keyword>
<keyword id="KW-0391">Immunity</keyword>
<keyword id="KW-0399">Innate immunity</keyword>
<keyword id="KW-0460">Magnesium</keyword>
<keyword id="KW-0464">Manganese</keyword>
<keyword id="KW-0479">Metal-binding</keyword>
<keyword id="KW-0645">Protease</keyword>
<keyword id="KW-1185">Reference proteome</keyword>
<keyword id="KW-0677">Repeat</keyword>
<keyword id="KW-0964">Secreted</keyword>
<keyword id="KW-0720">Serine protease</keyword>
<keyword id="KW-0732">Signal</keyword>
<keyword id="KW-0768">Sushi</keyword>
<sequence length="752" mass="83276">MGPLMVLFCLLFVYTGLADSAPSCPQNVNISGGTFTLSHGWAPGSLLTYSCPQGLYPSPASRLCKSSGQWQTPGATRSLSKAVCKPVRCPAPVSFENGIYTPRLGSYPVGGNVSFECEDGFILRGSPVRQCRPNGMWDGETAVCDNGAGHCPNPGISLGAVRTGFRFGHGDKVRYRCSSNLVLTGSSERECQGNGVWSGTEPICRQPYSYDFPEDVAPALGTSFSHMLGATNPTQKTKESLGRKIQIQRSGHLNLYLLLDCSQSVSENDFLIFKESASLMVDRIFSFEINVSVAIITFASKPKVLMSVLNDNSRDMTEVISSLENANYKDHENGTGTNTYAALNSVYLMMNNQMRILGMETMAWQEIRHAIILLTDGKSNMGGSPKTAVDRIREILNINQKRNDYLDIYAIGVGKLDVDWRELNELGSKKDGERHAFILQDTKALHQVFEHMLDVSKLTDTICGVGNMSANASDQERTPWHVTIKPKSQETCRGALISDQWVLTAAHCFRDGNDHSLWRVNVGDPKSQWGKEFLIEKAVISPGFDVFAKKNQGILEFYGDDIALLKLAQKVKMSTHARPICLPCTMEANLALRRPQGSTCRDHENELLNKQSVPAHFVALNGSKLNINLKMGVEWTSCAEVVSQEKTMFPNLTDVREVVTDQFLCSGTQEDESPCKGESGGAVFLERRFRFFQVGLVSWGLYNPCLGSADKNSRKRAPRSKVPPPRDFHINLFRMQPWLRQHLGDVLNFLPL</sequence>
<proteinExistence type="inferred from homology"/>
<organism>
    <name type="scientific">Gorilla gorilla gorilla</name>
    <name type="common">Western lowland gorilla</name>
    <dbReference type="NCBI Taxonomy" id="9595"/>
    <lineage>
        <taxon>Eukaryota</taxon>
        <taxon>Metazoa</taxon>
        <taxon>Chordata</taxon>
        <taxon>Craniata</taxon>
        <taxon>Vertebrata</taxon>
        <taxon>Euteleostomi</taxon>
        <taxon>Mammalia</taxon>
        <taxon>Eutheria</taxon>
        <taxon>Euarchontoglires</taxon>
        <taxon>Primates</taxon>
        <taxon>Haplorrhini</taxon>
        <taxon>Catarrhini</taxon>
        <taxon>Hominidae</taxon>
        <taxon>Gorilla</taxon>
    </lineage>
</organism>
<comment type="function">
    <text evidence="1">Precursor of the catalytic component of the C3 and C5 convertase complexes, which are part of the complement pathway, a cascade of proteins that leads to phagocytosis and breakdown of pathogens and signaling that strengthens the adaptive immune system. Component C2 is part of the classical, lectin and GZMK complement systems.</text>
</comment>
<comment type="function">
    <molecule>Serine protease complement C2b</molecule>
    <text evidence="1">Catalytic component of the complement C3 and C5 convertase complexes. Following complement activation, recruited to the surface of pathogens by complement C4b opsonin to form the C3 convertase, or C3b and C4b opsonins to form the C5 convertase. As part of the C3 convertase, cleaves and activate C3 into C3a anaphylatoxin and C3b opsonin, the next components of the complement pathways. As part of the C5 convertase, cleaves and activate C5 into C5a anaphylatoxin and C5b component of the membrane attack complex.</text>
</comment>
<comment type="catalytic activity">
    <molecule>Serine protease complement C2b</molecule>
    <reaction evidence="1">
        <text>Selective cleavage of Arg-|-Ser bond in complement component C3 alpha-chain to form C3a and C3b, and Arg-|-Xaa bond in complement component C5 alpha-chain to form C5a and C5b.</text>
        <dbReference type="EC" id="3.4.21.43"/>
    </reaction>
</comment>
<comment type="cofactor">
    <cofactor evidence="1">
        <name>Mg(2+)</name>
        <dbReference type="ChEBI" id="CHEBI:18420"/>
    </cofactor>
    <cofactor evidence="1">
        <name>Mn(2+)</name>
        <dbReference type="ChEBI" id="CHEBI:29035"/>
    </cofactor>
</comment>
<comment type="subunit">
    <molecule>Serine protease complement C2b</molecule>
    <text evidence="1">Serine protease component of the C3 convertase, also named C4bC2b, composed of the serine protease complement C2b and complement C4b. Serine protease component of the C5 convertase, also named C4bC2bC3b, composed of the serine protease complement C2b, complement C3b, as well as complement C4b.</text>
</comment>
<comment type="subcellular location">
    <subcellularLocation>
        <location evidence="1">Secreted</location>
    </subcellularLocation>
    <subcellularLocation>
        <location evidence="1">Cell surface</location>
    </subcellularLocation>
    <text evidence="1">Recruited to the surface of pathogens by complement C3b and complement C4b opsonins.</text>
</comment>
<comment type="domain">
    <text evidence="1">The MIDAS-like motif in the VWFA domain binds divalent metal cations.</text>
</comment>
<comment type="PTM">
    <text evidence="1">Cleaved and activated by different proteases depending on the complement pathway to generate complement C2a and serine protease complement C2b chains. Cleaved and activated by C1S following activation by the classical complement system. Cleaved and activated by MASP2 following activation by the lectin complement system. Cleaved and activated by GZMK following activation by the GZMK complement system.</text>
</comment>
<comment type="similarity">
    <text evidence="4">Belongs to the peptidase S1 family.</text>
</comment>
<comment type="caution">
    <text evidence="7">Historically, the serine protease complement C2b, which constitutes the larger catalytic fragment, was named C2a. It was later renamed C2b, a nomenclature widely accepted now.</text>
</comment>
<name>CO2_GORGO</name>